<accession>C5CD61</accession>
<gene>
    <name evidence="1" type="primary">miaA</name>
    <name type="ordered locus">Kole_0280</name>
</gene>
<evidence type="ECO:0000255" key="1">
    <source>
        <dbReference type="HAMAP-Rule" id="MF_00185"/>
    </source>
</evidence>
<feature type="chain" id="PRO_1000203938" description="tRNA dimethylallyltransferase">
    <location>
        <begin position="1"/>
        <end position="308"/>
    </location>
</feature>
<feature type="region of interest" description="Interaction with substrate tRNA" evidence="1">
    <location>
        <begin position="33"/>
        <end position="36"/>
    </location>
</feature>
<feature type="binding site" evidence="1">
    <location>
        <begin position="8"/>
        <end position="15"/>
    </location>
    <ligand>
        <name>ATP</name>
        <dbReference type="ChEBI" id="CHEBI:30616"/>
    </ligand>
</feature>
<feature type="binding site" evidence="1">
    <location>
        <begin position="10"/>
        <end position="15"/>
    </location>
    <ligand>
        <name>substrate</name>
    </ligand>
</feature>
<feature type="site" description="Interaction with substrate tRNA" evidence="1">
    <location>
        <position position="99"/>
    </location>
</feature>
<feature type="site" description="Interaction with substrate tRNA" evidence="1">
    <location>
        <position position="121"/>
    </location>
</feature>
<organism>
    <name type="scientific">Kosmotoga olearia (strain ATCC BAA-1733 / DSM 21960 / TBF 19.5.1)</name>
    <dbReference type="NCBI Taxonomy" id="521045"/>
    <lineage>
        <taxon>Bacteria</taxon>
        <taxon>Thermotogati</taxon>
        <taxon>Thermotogota</taxon>
        <taxon>Thermotogae</taxon>
        <taxon>Kosmotogales</taxon>
        <taxon>Kosmotogaceae</taxon>
        <taxon>Kosmotoga</taxon>
    </lineage>
</organism>
<proteinExistence type="inferred from homology"/>
<reference key="1">
    <citation type="submission" date="2009-06" db="EMBL/GenBank/DDBJ databases">
        <title>Complete sequence of Thermotogales bacterium TBF 19.5.1.</title>
        <authorList>
            <consortium name="US DOE Joint Genome Institute"/>
            <person name="Lucas S."/>
            <person name="Copeland A."/>
            <person name="Lapidus A."/>
            <person name="Glavina del Rio T."/>
            <person name="Tice H."/>
            <person name="Bruce D."/>
            <person name="Goodwin L."/>
            <person name="Pitluck S."/>
            <person name="Chertkov O."/>
            <person name="Brettin T."/>
            <person name="Detter J.C."/>
            <person name="Han C."/>
            <person name="Schmutz J."/>
            <person name="Larimer F."/>
            <person name="Land M."/>
            <person name="Hauser L."/>
            <person name="Kyrpides N."/>
            <person name="Ovchinnikova G."/>
            <person name="Noll K."/>
        </authorList>
    </citation>
    <scope>NUCLEOTIDE SEQUENCE [LARGE SCALE GENOMIC DNA]</scope>
    <source>
        <strain>ATCC BAA-1733 / DSM 21960 / TBF 19.5.1</strain>
    </source>
</reference>
<dbReference type="EC" id="2.5.1.75" evidence="1"/>
<dbReference type="EMBL" id="CP001634">
    <property type="protein sequence ID" value="ACR79005.1"/>
    <property type="molecule type" value="Genomic_DNA"/>
</dbReference>
<dbReference type="RefSeq" id="WP_012744792.1">
    <property type="nucleotide sequence ID" value="NC_012785.1"/>
</dbReference>
<dbReference type="SMR" id="C5CD61"/>
<dbReference type="STRING" id="521045.Kole_0280"/>
<dbReference type="KEGG" id="kol:Kole_0280"/>
<dbReference type="eggNOG" id="COG0324">
    <property type="taxonomic scope" value="Bacteria"/>
</dbReference>
<dbReference type="HOGENOM" id="CLU_032616_0_1_0"/>
<dbReference type="OrthoDB" id="9776390at2"/>
<dbReference type="Proteomes" id="UP000002382">
    <property type="component" value="Chromosome"/>
</dbReference>
<dbReference type="GO" id="GO:0005524">
    <property type="term" value="F:ATP binding"/>
    <property type="evidence" value="ECO:0007669"/>
    <property type="project" value="UniProtKB-UniRule"/>
</dbReference>
<dbReference type="GO" id="GO:0052381">
    <property type="term" value="F:tRNA dimethylallyltransferase activity"/>
    <property type="evidence" value="ECO:0007669"/>
    <property type="project" value="UniProtKB-UniRule"/>
</dbReference>
<dbReference type="GO" id="GO:0006400">
    <property type="term" value="P:tRNA modification"/>
    <property type="evidence" value="ECO:0007669"/>
    <property type="project" value="TreeGrafter"/>
</dbReference>
<dbReference type="Gene3D" id="1.10.20.140">
    <property type="match status" value="1"/>
</dbReference>
<dbReference type="Gene3D" id="3.40.50.300">
    <property type="entry name" value="P-loop containing nucleotide triphosphate hydrolases"/>
    <property type="match status" value="1"/>
</dbReference>
<dbReference type="HAMAP" id="MF_00185">
    <property type="entry name" value="IPP_trans"/>
    <property type="match status" value="1"/>
</dbReference>
<dbReference type="InterPro" id="IPR039657">
    <property type="entry name" value="Dimethylallyltransferase"/>
</dbReference>
<dbReference type="InterPro" id="IPR018022">
    <property type="entry name" value="IPT"/>
</dbReference>
<dbReference type="InterPro" id="IPR027417">
    <property type="entry name" value="P-loop_NTPase"/>
</dbReference>
<dbReference type="NCBIfam" id="TIGR00174">
    <property type="entry name" value="miaA"/>
    <property type="match status" value="1"/>
</dbReference>
<dbReference type="PANTHER" id="PTHR11088">
    <property type="entry name" value="TRNA DIMETHYLALLYLTRANSFERASE"/>
    <property type="match status" value="1"/>
</dbReference>
<dbReference type="PANTHER" id="PTHR11088:SF60">
    <property type="entry name" value="TRNA DIMETHYLALLYLTRANSFERASE"/>
    <property type="match status" value="1"/>
</dbReference>
<dbReference type="Pfam" id="PF01715">
    <property type="entry name" value="IPPT"/>
    <property type="match status" value="1"/>
</dbReference>
<dbReference type="SUPFAM" id="SSF52540">
    <property type="entry name" value="P-loop containing nucleoside triphosphate hydrolases"/>
    <property type="match status" value="1"/>
</dbReference>
<keyword id="KW-0067">ATP-binding</keyword>
<keyword id="KW-0460">Magnesium</keyword>
<keyword id="KW-0547">Nucleotide-binding</keyword>
<keyword id="KW-1185">Reference proteome</keyword>
<keyword id="KW-0808">Transferase</keyword>
<keyword id="KW-0819">tRNA processing</keyword>
<comment type="function">
    <text evidence="1">Catalyzes the transfer of a dimethylallyl group onto the adenine at position 37 in tRNAs that read codons beginning with uridine, leading to the formation of N6-(dimethylallyl)adenosine (i(6)A).</text>
</comment>
<comment type="catalytic activity">
    <reaction evidence="1">
        <text>adenosine(37) in tRNA + dimethylallyl diphosphate = N(6)-dimethylallyladenosine(37) in tRNA + diphosphate</text>
        <dbReference type="Rhea" id="RHEA:26482"/>
        <dbReference type="Rhea" id="RHEA-COMP:10162"/>
        <dbReference type="Rhea" id="RHEA-COMP:10375"/>
        <dbReference type="ChEBI" id="CHEBI:33019"/>
        <dbReference type="ChEBI" id="CHEBI:57623"/>
        <dbReference type="ChEBI" id="CHEBI:74411"/>
        <dbReference type="ChEBI" id="CHEBI:74415"/>
        <dbReference type="EC" id="2.5.1.75"/>
    </reaction>
</comment>
<comment type="cofactor">
    <cofactor evidence="1">
        <name>Mg(2+)</name>
        <dbReference type="ChEBI" id="CHEBI:18420"/>
    </cofactor>
</comment>
<comment type="subunit">
    <text evidence="1">Monomer.</text>
</comment>
<comment type="similarity">
    <text evidence="1">Belongs to the IPP transferase family.</text>
</comment>
<sequence length="308" mass="35672">MKIPMILGATAVGKTQFLVKLASLIPIEVVSVDSRQIYRYMDIGTAKPTREELSKLKHHVIDVVDPDEDFNVFEYRKIALKAMDEIVKKGRIPVFAGGSGLYAETLMKGIVENVPRNDKVREALKTLEVNAPGSLRKLLEKVDHEAYEKIHPNDLKRTIRYLEVFFTTGKTLTSLQKIHKCSNQFTVIILERDRRELAERIENRVDKMVESGLIEEVVRLKEMGYTRELNSQQTIGYAEIWSYLEGEVTLERATELIKRNTRRFARRQIIWFRRYKDAKRISLSETNENDILSLLKEDILNVWGGKYG</sequence>
<protein>
    <recommendedName>
        <fullName evidence="1">tRNA dimethylallyltransferase</fullName>
        <ecNumber evidence="1">2.5.1.75</ecNumber>
    </recommendedName>
    <alternativeName>
        <fullName evidence="1">Dimethylallyl diphosphate:tRNA dimethylallyltransferase</fullName>
        <shortName evidence="1">DMAPP:tRNA dimethylallyltransferase</shortName>
        <shortName evidence="1">DMATase</shortName>
    </alternativeName>
    <alternativeName>
        <fullName evidence="1">Isopentenyl-diphosphate:tRNA isopentenyltransferase</fullName>
        <shortName evidence="1">IPP transferase</shortName>
        <shortName evidence="1">IPPT</shortName>
        <shortName evidence="1">IPTase</shortName>
    </alternativeName>
</protein>
<name>MIAA_KOSOT</name>